<accession>B1IW72</accession>
<evidence type="ECO:0000255" key="1">
    <source>
        <dbReference type="HAMAP-Rule" id="MF_01813"/>
    </source>
</evidence>
<proteinExistence type="inferred from homology"/>
<organism>
    <name type="scientific">Escherichia coli (strain ATCC 8739 / DSM 1576 / NBRC 3972 / NCIMB 8545 / WDCM 00012 / Crooks)</name>
    <dbReference type="NCBI Taxonomy" id="481805"/>
    <lineage>
        <taxon>Bacteria</taxon>
        <taxon>Pseudomonadati</taxon>
        <taxon>Pseudomonadota</taxon>
        <taxon>Gammaproteobacteria</taxon>
        <taxon>Enterobacterales</taxon>
        <taxon>Enterobacteriaceae</taxon>
        <taxon>Escherichia</taxon>
    </lineage>
</organism>
<dbReference type="EC" id="2.1.1.163" evidence="1"/>
<dbReference type="EC" id="2.1.1.201" evidence="1"/>
<dbReference type="EMBL" id="CP000946">
    <property type="protein sequence ID" value="ACA79772.1"/>
    <property type="molecule type" value="Genomic_DNA"/>
</dbReference>
<dbReference type="RefSeq" id="WP_000227958.1">
    <property type="nucleotide sequence ID" value="NZ_MTFT01000015.1"/>
</dbReference>
<dbReference type="SMR" id="B1IW72"/>
<dbReference type="GeneID" id="93778102"/>
<dbReference type="KEGG" id="ecl:EcolC_4175"/>
<dbReference type="HOGENOM" id="CLU_037990_0_0_6"/>
<dbReference type="UniPathway" id="UPA00079">
    <property type="reaction ID" value="UER00169"/>
</dbReference>
<dbReference type="UniPathway" id="UPA00232"/>
<dbReference type="GO" id="GO:0008425">
    <property type="term" value="F:2-methoxy-6-polyprenyl-1,4-benzoquinol methyltransferase activity"/>
    <property type="evidence" value="ECO:0007669"/>
    <property type="project" value="UniProtKB-UniRule"/>
</dbReference>
<dbReference type="GO" id="GO:0043770">
    <property type="term" value="F:demethylmenaquinone methyltransferase activity"/>
    <property type="evidence" value="ECO:0007669"/>
    <property type="project" value="UniProtKB-UniRule"/>
</dbReference>
<dbReference type="GO" id="GO:0009060">
    <property type="term" value="P:aerobic respiration"/>
    <property type="evidence" value="ECO:0007669"/>
    <property type="project" value="UniProtKB-UniRule"/>
</dbReference>
<dbReference type="GO" id="GO:0009234">
    <property type="term" value="P:menaquinone biosynthetic process"/>
    <property type="evidence" value="ECO:0007669"/>
    <property type="project" value="UniProtKB-UniRule"/>
</dbReference>
<dbReference type="GO" id="GO:0032259">
    <property type="term" value="P:methylation"/>
    <property type="evidence" value="ECO:0007669"/>
    <property type="project" value="UniProtKB-KW"/>
</dbReference>
<dbReference type="CDD" id="cd02440">
    <property type="entry name" value="AdoMet_MTases"/>
    <property type="match status" value="1"/>
</dbReference>
<dbReference type="FunFam" id="3.40.50.150:FF:000014">
    <property type="entry name" value="Ubiquinone/menaquinone biosynthesis C-methyltransferase UbiE"/>
    <property type="match status" value="1"/>
</dbReference>
<dbReference type="Gene3D" id="3.40.50.150">
    <property type="entry name" value="Vaccinia Virus protein VP39"/>
    <property type="match status" value="1"/>
</dbReference>
<dbReference type="HAMAP" id="MF_01813">
    <property type="entry name" value="MenG_UbiE_methyltr"/>
    <property type="match status" value="1"/>
</dbReference>
<dbReference type="InterPro" id="IPR029063">
    <property type="entry name" value="SAM-dependent_MTases_sf"/>
</dbReference>
<dbReference type="InterPro" id="IPR004033">
    <property type="entry name" value="UbiE/COQ5_MeTrFase"/>
</dbReference>
<dbReference type="InterPro" id="IPR023576">
    <property type="entry name" value="UbiE/COQ5_MeTrFase_CS"/>
</dbReference>
<dbReference type="NCBIfam" id="TIGR01934">
    <property type="entry name" value="MenG_MenH_UbiE"/>
    <property type="match status" value="1"/>
</dbReference>
<dbReference type="NCBIfam" id="NF001240">
    <property type="entry name" value="PRK00216.1-1"/>
    <property type="match status" value="1"/>
</dbReference>
<dbReference type="NCBIfam" id="NF001242">
    <property type="entry name" value="PRK00216.1-3"/>
    <property type="match status" value="1"/>
</dbReference>
<dbReference type="NCBIfam" id="NF001244">
    <property type="entry name" value="PRK00216.1-5"/>
    <property type="match status" value="1"/>
</dbReference>
<dbReference type="PANTHER" id="PTHR43591:SF24">
    <property type="entry name" value="2-METHOXY-6-POLYPRENYL-1,4-BENZOQUINOL METHYLASE, MITOCHONDRIAL"/>
    <property type="match status" value="1"/>
</dbReference>
<dbReference type="PANTHER" id="PTHR43591">
    <property type="entry name" value="METHYLTRANSFERASE"/>
    <property type="match status" value="1"/>
</dbReference>
<dbReference type="Pfam" id="PF01209">
    <property type="entry name" value="Ubie_methyltran"/>
    <property type="match status" value="1"/>
</dbReference>
<dbReference type="SUPFAM" id="SSF53335">
    <property type="entry name" value="S-adenosyl-L-methionine-dependent methyltransferases"/>
    <property type="match status" value="1"/>
</dbReference>
<dbReference type="PROSITE" id="PS51608">
    <property type="entry name" value="SAM_MT_UBIE"/>
    <property type="match status" value="1"/>
</dbReference>
<dbReference type="PROSITE" id="PS01183">
    <property type="entry name" value="UBIE_1"/>
    <property type="match status" value="1"/>
</dbReference>
<dbReference type="PROSITE" id="PS01184">
    <property type="entry name" value="UBIE_2"/>
    <property type="match status" value="1"/>
</dbReference>
<comment type="function">
    <text evidence="1">Methyltransferase required for the conversion of demethylmenaquinol (DMKH2) to menaquinol (MKH2) and the conversion of 2-polyprenyl-6-methoxy-1,4-benzoquinol (DDMQH2) to 2-polyprenyl-3-methyl-6-methoxy-1,4-benzoquinol (DMQH2).</text>
</comment>
<comment type="catalytic activity">
    <reaction evidence="1">
        <text>a 2-demethylmenaquinol + S-adenosyl-L-methionine = a menaquinol + S-adenosyl-L-homocysteine + H(+)</text>
        <dbReference type="Rhea" id="RHEA:42640"/>
        <dbReference type="Rhea" id="RHEA-COMP:9539"/>
        <dbReference type="Rhea" id="RHEA-COMP:9563"/>
        <dbReference type="ChEBI" id="CHEBI:15378"/>
        <dbReference type="ChEBI" id="CHEBI:18151"/>
        <dbReference type="ChEBI" id="CHEBI:55437"/>
        <dbReference type="ChEBI" id="CHEBI:57856"/>
        <dbReference type="ChEBI" id="CHEBI:59789"/>
        <dbReference type="EC" id="2.1.1.163"/>
    </reaction>
</comment>
<comment type="catalytic activity">
    <reaction evidence="1">
        <text>a 2-methoxy-6-(all-trans-polyprenyl)benzene-1,4-diol + S-adenosyl-L-methionine = a 5-methoxy-2-methyl-3-(all-trans-polyprenyl)benzene-1,4-diol + S-adenosyl-L-homocysteine + H(+)</text>
        <dbReference type="Rhea" id="RHEA:28286"/>
        <dbReference type="Rhea" id="RHEA-COMP:10858"/>
        <dbReference type="Rhea" id="RHEA-COMP:10859"/>
        <dbReference type="ChEBI" id="CHEBI:15378"/>
        <dbReference type="ChEBI" id="CHEBI:57856"/>
        <dbReference type="ChEBI" id="CHEBI:59789"/>
        <dbReference type="ChEBI" id="CHEBI:84166"/>
        <dbReference type="ChEBI" id="CHEBI:84167"/>
        <dbReference type="EC" id="2.1.1.201"/>
    </reaction>
</comment>
<comment type="pathway">
    <text evidence="1">Quinol/quinone metabolism; menaquinone biosynthesis; menaquinol from 1,4-dihydroxy-2-naphthoate: step 2/2.</text>
</comment>
<comment type="pathway">
    <text evidence="1">Cofactor biosynthesis; ubiquinone biosynthesis.</text>
</comment>
<comment type="similarity">
    <text evidence="1">Belongs to the class I-like SAM-binding methyltransferase superfamily. MenG/UbiE family.</text>
</comment>
<reference key="1">
    <citation type="submission" date="2008-02" db="EMBL/GenBank/DDBJ databases">
        <title>Complete sequence of Escherichia coli C str. ATCC 8739.</title>
        <authorList>
            <person name="Copeland A."/>
            <person name="Lucas S."/>
            <person name="Lapidus A."/>
            <person name="Glavina del Rio T."/>
            <person name="Dalin E."/>
            <person name="Tice H."/>
            <person name="Bruce D."/>
            <person name="Goodwin L."/>
            <person name="Pitluck S."/>
            <person name="Kiss H."/>
            <person name="Brettin T."/>
            <person name="Detter J.C."/>
            <person name="Han C."/>
            <person name="Kuske C.R."/>
            <person name="Schmutz J."/>
            <person name="Larimer F."/>
            <person name="Land M."/>
            <person name="Hauser L."/>
            <person name="Kyrpides N."/>
            <person name="Mikhailova N."/>
            <person name="Ingram L."/>
            <person name="Richardson P."/>
        </authorList>
    </citation>
    <scope>NUCLEOTIDE SEQUENCE [LARGE SCALE GENOMIC DNA]</scope>
    <source>
        <strain>ATCC 8739 / DSM 1576 / NBRC 3972 / NCIMB 8545 / WDCM 00012 / Crooks</strain>
    </source>
</reference>
<keyword id="KW-0474">Menaquinone biosynthesis</keyword>
<keyword id="KW-0489">Methyltransferase</keyword>
<keyword id="KW-0949">S-adenosyl-L-methionine</keyword>
<keyword id="KW-0808">Transferase</keyword>
<keyword id="KW-0831">Ubiquinone biosynthesis</keyword>
<name>UBIE_ECOLC</name>
<sequence length="251" mass="28073">MVDKSQETTHFGFQTVAKEQKADMVAHVFHSVASKYDVMNDLMSFGIHRLWKRFTIDCSGVRRGQTVLDLAGGTGDLTAKFSRLVGETGKVVLADINESMLKMGREKLRNIGVIGNVEYVQANAEALPFPDNTFDCITISFGLRNVTDKDKALRSMYRVLKPGGRLLVLEFSKPIIEPLSKAYDAYSFHVLPRIGSLVANDADSYRYLAESIRMHPDQDTLKAMMQDAGFESVDYYNLTAGVVALHRGYKF</sequence>
<gene>
    <name evidence="1" type="primary">ubiE</name>
    <name type="ordered locus">EcolC_4175</name>
</gene>
<feature type="chain" id="PRO_1000088282" description="Ubiquinone/menaquinone biosynthesis C-methyltransferase UbiE">
    <location>
        <begin position="1"/>
        <end position="251"/>
    </location>
</feature>
<feature type="binding site" evidence="1">
    <location>
        <position position="74"/>
    </location>
    <ligand>
        <name>S-adenosyl-L-methionine</name>
        <dbReference type="ChEBI" id="CHEBI:59789"/>
    </ligand>
</feature>
<feature type="binding site" evidence="1">
    <location>
        <position position="95"/>
    </location>
    <ligand>
        <name>S-adenosyl-L-methionine</name>
        <dbReference type="ChEBI" id="CHEBI:59789"/>
    </ligand>
</feature>
<feature type="binding site" evidence="1">
    <location>
        <begin position="123"/>
        <end position="124"/>
    </location>
    <ligand>
        <name>S-adenosyl-L-methionine</name>
        <dbReference type="ChEBI" id="CHEBI:59789"/>
    </ligand>
</feature>
<feature type="binding site" evidence="1">
    <location>
        <position position="140"/>
    </location>
    <ligand>
        <name>S-adenosyl-L-methionine</name>
        <dbReference type="ChEBI" id="CHEBI:59789"/>
    </ligand>
</feature>
<protein>
    <recommendedName>
        <fullName evidence="1">Ubiquinone/menaquinone biosynthesis C-methyltransferase UbiE</fullName>
        <ecNumber evidence="1">2.1.1.163</ecNumber>
        <ecNumber evidence="1">2.1.1.201</ecNumber>
    </recommendedName>
    <alternativeName>
        <fullName evidence="1">2-methoxy-6-polyprenyl-1,4-benzoquinol methylase</fullName>
    </alternativeName>
    <alternativeName>
        <fullName evidence="1">Demethylmenaquinone methyltransferase</fullName>
    </alternativeName>
</protein>